<proteinExistence type="evidence at transcript level"/>
<name>RSMN_MACFA</name>
<evidence type="ECO:0000250" key="1"/>
<evidence type="ECO:0000250" key="2">
    <source>
        <dbReference type="UniProtKB" id="P14678"/>
    </source>
</evidence>
<evidence type="ECO:0000250" key="3">
    <source>
        <dbReference type="UniProtKB" id="P63162"/>
    </source>
</evidence>
<evidence type="ECO:0000250" key="4">
    <source>
        <dbReference type="UniProtKB" id="P63163"/>
    </source>
</evidence>
<evidence type="ECO:0000255" key="5">
    <source>
        <dbReference type="PROSITE-ProRule" id="PRU01346"/>
    </source>
</evidence>
<evidence type="ECO:0000256" key="6">
    <source>
        <dbReference type="SAM" id="MobiDB-lite"/>
    </source>
</evidence>
<evidence type="ECO:0000305" key="7"/>
<keyword id="KW-0488">Methylation</keyword>
<keyword id="KW-0539">Nucleus</keyword>
<keyword id="KW-1185">Reference proteome</keyword>
<keyword id="KW-0677">Repeat</keyword>
<keyword id="KW-0687">Ribonucleoprotein</keyword>
<keyword id="KW-0694">RNA-binding</keyword>
<dbReference type="EMBL" id="AB125194">
    <property type="protein sequence ID" value="BAD51982.1"/>
    <property type="molecule type" value="mRNA"/>
</dbReference>
<dbReference type="EMBL" id="AB169720">
    <property type="protein sequence ID" value="BAE01801.1"/>
    <property type="molecule type" value="mRNA"/>
</dbReference>
<dbReference type="EMBL" id="AB169895">
    <property type="protein sequence ID" value="BAE01976.1"/>
    <property type="molecule type" value="mRNA"/>
</dbReference>
<dbReference type="RefSeq" id="NP_001274613.1">
    <property type="nucleotide sequence ID" value="NM_001287684.1"/>
</dbReference>
<dbReference type="RefSeq" id="XP_005559000.1">
    <property type="nucleotide sequence ID" value="XM_005558943.2"/>
</dbReference>
<dbReference type="RefSeq" id="XP_015307952.1">
    <property type="nucleotide sequence ID" value="XM_015452466.1"/>
</dbReference>
<dbReference type="RefSeq" id="XP_015307953.1">
    <property type="nucleotide sequence ID" value="XM_015452467.1"/>
</dbReference>
<dbReference type="RefSeq" id="XP_015307955.1">
    <property type="nucleotide sequence ID" value="XM_015452469.3"/>
</dbReference>
<dbReference type="RefSeq" id="XP_045253081.1">
    <property type="nucleotide sequence ID" value="XM_045397146.2"/>
</dbReference>
<dbReference type="RefSeq" id="XP_045253087.1">
    <property type="nucleotide sequence ID" value="XM_045397152.2"/>
</dbReference>
<dbReference type="RefSeq" id="XP_045253088.1">
    <property type="nucleotide sequence ID" value="XM_045397153.2"/>
</dbReference>
<dbReference type="RefSeq" id="XP_045253090.1">
    <property type="nucleotide sequence ID" value="XM_045397155.2"/>
</dbReference>
<dbReference type="RefSeq" id="XP_065403310.1">
    <property type="nucleotide sequence ID" value="XM_065547238.1"/>
</dbReference>
<dbReference type="RefSeq" id="XP_065403311.1">
    <property type="nucleotide sequence ID" value="XM_065547239.1"/>
</dbReference>
<dbReference type="RefSeq" id="XP_065403312.1">
    <property type="nucleotide sequence ID" value="XM_065547240.1"/>
</dbReference>
<dbReference type="RefSeq" id="XP_065403314.1">
    <property type="nucleotide sequence ID" value="XM_065547242.1"/>
</dbReference>
<dbReference type="RefSeq" id="XP_065403315.1">
    <property type="nucleotide sequence ID" value="XM_065547243.1"/>
</dbReference>
<dbReference type="RefSeq" id="XP_065403316.1">
    <property type="nucleotide sequence ID" value="XM_065547244.1"/>
</dbReference>
<dbReference type="RefSeq" id="XP_065403317.1">
    <property type="nucleotide sequence ID" value="XM_065547245.1"/>
</dbReference>
<dbReference type="RefSeq" id="XP_065403318.1">
    <property type="nucleotide sequence ID" value="XM_065547246.1"/>
</dbReference>
<dbReference type="RefSeq" id="XP_065403319.1">
    <property type="nucleotide sequence ID" value="XM_065547247.1"/>
</dbReference>
<dbReference type="RefSeq" id="XP_065403320.1">
    <property type="nucleotide sequence ID" value="XM_065547248.1"/>
</dbReference>
<dbReference type="RefSeq" id="XP_065403321.1">
    <property type="nucleotide sequence ID" value="XM_065547249.1"/>
</dbReference>
<dbReference type="RefSeq" id="XP_065403322.1">
    <property type="nucleotide sequence ID" value="XM_065547250.1"/>
</dbReference>
<dbReference type="RefSeq" id="XP_065403323.1">
    <property type="nucleotide sequence ID" value="XM_065547251.1"/>
</dbReference>
<dbReference type="RefSeq" id="XP_065403324.1">
    <property type="nucleotide sequence ID" value="XM_065547252.1"/>
</dbReference>
<dbReference type="RefSeq" id="XP_065403325.1">
    <property type="nucleotide sequence ID" value="XM_065547253.1"/>
</dbReference>
<dbReference type="RefSeq" id="XP_065403326.1">
    <property type="nucleotide sequence ID" value="XM_065547254.1"/>
</dbReference>
<dbReference type="RefSeq" id="XP_065403327.1">
    <property type="nucleotide sequence ID" value="XM_065547255.1"/>
</dbReference>
<dbReference type="RefSeq" id="XP_065403328.1">
    <property type="nucleotide sequence ID" value="XM_065547256.1"/>
</dbReference>
<dbReference type="RefSeq" id="XP_065403329.1">
    <property type="nucleotide sequence ID" value="XM_065547257.1"/>
</dbReference>
<dbReference type="RefSeq" id="XP_065403330.1">
    <property type="nucleotide sequence ID" value="XM_065547258.1"/>
</dbReference>
<dbReference type="RefSeq" id="XP_065403331.1">
    <property type="nucleotide sequence ID" value="XM_065547259.1"/>
</dbReference>
<dbReference type="RefSeq" id="XP_065403332.1">
    <property type="nucleotide sequence ID" value="XM_065547260.1"/>
</dbReference>
<dbReference type="RefSeq" id="XP_065403333.1">
    <property type="nucleotide sequence ID" value="XM_065547261.1"/>
</dbReference>
<dbReference type="SMR" id="Q60HD3"/>
<dbReference type="STRING" id="9541.ENSMFAP00000030186"/>
<dbReference type="Ensembl" id="ENSMFAT00000077666.1">
    <property type="protein sequence ID" value="ENSMFAP00000056451.1"/>
    <property type="gene ID" value="ENSMFAG00000042235.2"/>
</dbReference>
<dbReference type="GeneID" id="102133696"/>
<dbReference type="CTD" id="6638"/>
<dbReference type="VEuPathDB" id="HostDB:ENSMFAG00000042235"/>
<dbReference type="eggNOG" id="KOG3168">
    <property type="taxonomic scope" value="Eukaryota"/>
</dbReference>
<dbReference type="GeneTree" id="ENSGT00940000158222"/>
<dbReference type="OMA" id="MGTTKMV"/>
<dbReference type="Proteomes" id="UP000233100">
    <property type="component" value="Chromosome 7"/>
</dbReference>
<dbReference type="Bgee" id="ENSMFAG00000042235">
    <property type="expression patterns" value="Expressed in cerebellum and 13 other cell types or tissues"/>
</dbReference>
<dbReference type="GO" id="GO:0016607">
    <property type="term" value="C:nuclear speck"/>
    <property type="evidence" value="ECO:0007669"/>
    <property type="project" value="TreeGrafter"/>
</dbReference>
<dbReference type="GO" id="GO:1990904">
    <property type="term" value="C:ribonucleoprotein complex"/>
    <property type="evidence" value="ECO:0007669"/>
    <property type="project" value="UniProtKB-KW"/>
</dbReference>
<dbReference type="GO" id="GO:0003723">
    <property type="term" value="F:RNA binding"/>
    <property type="evidence" value="ECO:0007669"/>
    <property type="project" value="UniProtKB-KW"/>
</dbReference>
<dbReference type="CDD" id="cd01717">
    <property type="entry name" value="Sm_B"/>
    <property type="match status" value="1"/>
</dbReference>
<dbReference type="FunFam" id="2.30.30.100:FF:000004">
    <property type="entry name" value="Small nuclear ribonucleoprotein-associated proteins"/>
    <property type="match status" value="1"/>
</dbReference>
<dbReference type="Gene3D" id="2.30.30.100">
    <property type="match status" value="1"/>
</dbReference>
<dbReference type="InterPro" id="IPR010920">
    <property type="entry name" value="LSM_dom_sf"/>
</dbReference>
<dbReference type="InterPro" id="IPR047575">
    <property type="entry name" value="Sm"/>
</dbReference>
<dbReference type="InterPro" id="IPR001163">
    <property type="entry name" value="Sm_dom_euk/arc"/>
</dbReference>
<dbReference type="InterPro" id="IPR017131">
    <property type="entry name" value="snRNP-assoc_SmB/SmN"/>
</dbReference>
<dbReference type="PANTHER" id="PTHR14508">
    <property type="entry name" value="SNRPN UPSTREAM READING FRAME PROTEIN, SNURF"/>
    <property type="match status" value="1"/>
</dbReference>
<dbReference type="PANTHER" id="PTHR14508:SF2">
    <property type="entry name" value="SNRPN UPSTREAM READING FRAME PROTEIN-RELATED"/>
    <property type="match status" value="1"/>
</dbReference>
<dbReference type="Pfam" id="PF01423">
    <property type="entry name" value="LSM"/>
    <property type="match status" value="1"/>
</dbReference>
<dbReference type="PIRSF" id="PIRSF037187">
    <property type="entry name" value="snRNP_SmB/SmN"/>
    <property type="match status" value="1"/>
</dbReference>
<dbReference type="SMART" id="SM00651">
    <property type="entry name" value="Sm"/>
    <property type="match status" value="1"/>
</dbReference>
<dbReference type="SUPFAM" id="SSF50182">
    <property type="entry name" value="Sm-like ribonucleoproteins"/>
    <property type="match status" value="1"/>
</dbReference>
<dbReference type="PROSITE" id="PS52002">
    <property type="entry name" value="SM"/>
    <property type="match status" value="1"/>
</dbReference>
<sequence>MTVGKSSKMLQHIDYRMRCILQDGRIFIGTFKAFDKHMNLILCDCDEFRKIKPKNAKQPEREEKRVLGLVLLRGENLVSMTVEGPPPKDTGIARVPLAGAAGGPGVGRAAGRGVPAGVPIPQAPAGLAGPVRGVGGPSQQVMTPQGRGTVAAAAVAATASIAGAPTQYPPGRGTPPPPVGRATPPPGIMAPPPGMRPPMGPPIGLPPARGTPIGMPPPGMRPPPPGIRGPPPPGMRPPRP</sequence>
<organism>
    <name type="scientific">Macaca fascicularis</name>
    <name type="common">Crab-eating macaque</name>
    <name type="synonym">Cynomolgus monkey</name>
    <dbReference type="NCBI Taxonomy" id="9541"/>
    <lineage>
        <taxon>Eukaryota</taxon>
        <taxon>Metazoa</taxon>
        <taxon>Chordata</taxon>
        <taxon>Craniata</taxon>
        <taxon>Vertebrata</taxon>
        <taxon>Euteleostomi</taxon>
        <taxon>Mammalia</taxon>
        <taxon>Eutheria</taxon>
        <taxon>Euarchontoglires</taxon>
        <taxon>Primates</taxon>
        <taxon>Haplorrhini</taxon>
        <taxon>Catarrhini</taxon>
        <taxon>Cercopithecidae</taxon>
        <taxon>Cercopithecinae</taxon>
        <taxon>Macaca</taxon>
    </lineage>
</organism>
<comment type="function">
    <text evidence="1">May be involved in tissue-specific alternative RNA processing events.</text>
</comment>
<comment type="subunit">
    <text evidence="1">Interacts with TDRD3.</text>
</comment>
<comment type="subcellular location">
    <subcellularLocation>
        <location evidence="1">Nucleus</location>
    </subcellularLocation>
</comment>
<comment type="miscellaneous">
    <text>Encoded on a bicistronic transcript that code for two proteins, SNRPN and SNURF.</text>
</comment>
<comment type="similarity">
    <text evidence="7">Belongs to the snRNP SmB/SmN family.</text>
</comment>
<protein>
    <recommendedName>
        <fullName>Small nuclear ribonucleoprotein-associated protein N</fullName>
        <shortName>snRNP-N</shortName>
    </recommendedName>
    <alternativeName>
        <fullName>Sm protein N</fullName>
        <shortName>Sm-N</shortName>
        <shortName>SmN</shortName>
    </alternativeName>
</protein>
<reference key="1">
    <citation type="submission" date="2003-10" db="EMBL/GenBank/DDBJ databases">
        <title>Isolation and characterization of cDNA for macaque neurological disease genes.</title>
        <authorList>
            <person name="Kusuda J."/>
            <person name="Osada N."/>
            <person name="Tanuma R."/>
            <person name="Hirata M."/>
            <person name="Sugano S."/>
            <person name="Hashimoto K."/>
        </authorList>
    </citation>
    <scope>NUCLEOTIDE SEQUENCE [LARGE SCALE MRNA]</scope>
    <source>
        <tissue>Brain cortex</tissue>
    </source>
</reference>
<reference key="2">
    <citation type="submission" date="2005-06" db="EMBL/GenBank/DDBJ databases">
        <title>DNA sequences of macaque genes expressed in brain or testis and its evolutionary implications.</title>
        <authorList>
            <consortium name="International consortium for macaque cDNA sequencing and analysis"/>
        </authorList>
    </citation>
    <scope>NUCLEOTIDE SEQUENCE [LARGE SCALE MRNA]</scope>
    <source>
        <tissue>Frontal cortex</tissue>
        <tissue>Temporal cortex</tissue>
    </source>
</reference>
<gene>
    <name type="primary">SNRPN</name>
    <name type="ORF">QccE-19338</name>
    <name type="ORF">QflA-11237</name>
    <name type="ORF">QtrA-10022</name>
</gene>
<accession>Q60HD3</accession>
<feature type="chain" id="PRO_0000249874" description="Small nuclear ribonucleoprotein-associated protein N">
    <location>
        <begin position="1"/>
        <end position="240"/>
    </location>
</feature>
<feature type="domain" description="Sm" evidence="5">
    <location>
        <begin position="4"/>
        <end position="86"/>
    </location>
</feature>
<feature type="repeat">
    <location>
        <begin position="175"/>
        <end position="181"/>
    </location>
</feature>
<feature type="repeat">
    <location>
        <begin position="191"/>
        <end position="196"/>
    </location>
</feature>
<feature type="repeat">
    <location>
        <begin position="216"/>
        <end position="221"/>
    </location>
</feature>
<feature type="repeat">
    <location>
        <begin position="222"/>
        <end position="228"/>
    </location>
</feature>
<feature type="repeat">
    <location>
        <begin position="230"/>
        <end position="236"/>
    </location>
</feature>
<feature type="region of interest" description="Disordered" evidence="6">
    <location>
        <begin position="163"/>
        <end position="240"/>
    </location>
</feature>
<feature type="region of interest" description="Repeat-rich region">
    <location>
        <begin position="175"/>
        <end position="236"/>
    </location>
</feature>
<feature type="compositionally biased region" description="Pro residues" evidence="6">
    <location>
        <begin position="172"/>
        <end position="205"/>
    </location>
</feature>
<feature type="compositionally biased region" description="Pro residues" evidence="6">
    <location>
        <begin position="214"/>
        <end position="240"/>
    </location>
</feature>
<feature type="modified residue" description="Asymmetric dimethylarginine; alternate" evidence="2">
    <location>
        <position position="108"/>
    </location>
</feature>
<feature type="modified residue" description="Dimethylated arginine; alternate" evidence="2">
    <location>
        <position position="108"/>
    </location>
</feature>
<feature type="modified residue" description="Omega-N-methylarginine; alternate" evidence="4">
    <location>
        <position position="108"/>
    </location>
</feature>
<feature type="modified residue" description="Asymmetric dimethylarginine; alternate" evidence="2">
    <location>
        <position position="112"/>
    </location>
</feature>
<feature type="modified residue" description="Dimethylated arginine; alternate" evidence="2">
    <location>
        <position position="112"/>
    </location>
</feature>
<feature type="modified residue" description="Omega-N-methylarginine; alternate" evidence="2">
    <location>
        <position position="112"/>
    </location>
</feature>
<feature type="modified residue" description="Omega-N-methylarginine" evidence="2">
    <location>
        <position position="147"/>
    </location>
</feature>
<feature type="modified residue" description="Omega-N-methylarginine" evidence="3">
    <location>
        <position position="172"/>
    </location>
</feature>